<gene>
    <name evidence="1" type="primary">ppk</name>
</gene>
<keyword id="KW-0067">ATP-binding</keyword>
<keyword id="KW-0418">Kinase</keyword>
<keyword id="KW-0460">Magnesium</keyword>
<keyword id="KW-0479">Metal-binding</keyword>
<keyword id="KW-0547">Nucleotide-binding</keyword>
<keyword id="KW-0597">Phosphoprotein</keyword>
<keyword id="KW-0808">Transferase</keyword>
<evidence type="ECO:0000255" key="1">
    <source>
        <dbReference type="HAMAP-Rule" id="MF_00347"/>
    </source>
</evidence>
<organism>
    <name type="scientific">Campylobacter coli</name>
    <dbReference type="NCBI Taxonomy" id="195"/>
    <lineage>
        <taxon>Bacteria</taxon>
        <taxon>Pseudomonadati</taxon>
        <taxon>Campylobacterota</taxon>
        <taxon>Epsilonproteobacteria</taxon>
        <taxon>Campylobacterales</taxon>
        <taxon>Campylobacteraceae</taxon>
        <taxon>Campylobacter</taxon>
    </lineage>
</organism>
<protein>
    <recommendedName>
        <fullName evidence="1">Polyphosphate kinase</fullName>
        <ecNumber evidence="1">2.7.4.1</ecNumber>
    </recommendedName>
    <alternativeName>
        <fullName evidence="1">ATP-polyphosphate phosphotransferase</fullName>
    </alternativeName>
    <alternativeName>
        <fullName evidence="1">Polyphosphoric acid kinase</fullName>
    </alternativeName>
</protein>
<proteinExistence type="inferred from homology"/>
<comment type="function">
    <text evidence="1">Catalyzes the reversible transfer of the terminal phosphate of ATP to form a long-chain polyphosphate (polyP).</text>
</comment>
<comment type="catalytic activity">
    <reaction evidence="1">
        <text>[phosphate](n) + ATP = [phosphate](n+1) + ADP</text>
        <dbReference type="Rhea" id="RHEA:19573"/>
        <dbReference type="Rhea" id="RHEA-COMP:9859"/>
        <dbReference type="Rhea" id="RHEA-COMP:14280"/>
        <dbReference type="ChEBI" id="CHEBI:16838"/>
        <dbReference type="ChEBI" id="CHEBI:30616"/>
        <dbReference type="ChEBI" id="CHEBI:456216"/>
        <dbReference type="EC" id="2.7.4.1"/>
    </reaction>
</comment>
<comment type="cofactor">
    <cofactor evidence="1">
        <name>Mg(2+)</name>
        <dbReference type="ChEBI" id="CHEBI:18420"/>
    </cofactor>
</comment>
<comment type="PTM">
    <text evidence="1">An intermediate of this reaction is the autophosphorylated ppk in which a phosphate is covalently linked to a histidine residue through a N-P bond.</text>
</comment>
<comment type="similarity">
    <text evidence="1">Belongs to the polyphosphate kinase 1 (PPK1) family.</text>
</comment>
<reference key="1">
    <citation type="submission" date="1996-08" db="EMBL/GenBank/DDBJ databases">
        <title>Molecular characterisation of the polyphosphate kinase gene from Campylobacter coli.</title>
        <authorList>
            <person name="Richardson P.T."/>
            <person name="Park S.F."/>
        </authorList>
    </citation>
    <scope>NUCLEOTIDE SEQUENCE [GENOMIC DNA]</scope>
</reference>
<feature type="chain" id="PRO_0000128636" description="Polyphosphate kinase">
    <location>
        <begin position="1"/>
        <end position="694"/>
    </location>
</feature>
<feature type="active site" description="Phosphohistidine intermediate" evidence="1">
    <location>
        <position position="427"/>
    </location>
</feature>
<feature type="binding site" evidence="1">
    <location>
        <position position="45"/>
    </location>
    <ligand>
        <name>ATP</name>
        <dbReference type="ChEBI" id="CHEBI:30616"/>
    </ligand>
</feature>
<feature type="binding site" evidence="1">
    <location>
        <position position="367"/>
    </location>
    <ligand>
        <name>Mg(2+)</name>
        <dbReference type="ChEBI" id="CHEBI:18420"/>
    </ligand>
</feature>
<feature type="binding site" evidence="1">
    <location>
        <position position="397"/>
    </location>
    <ligand>
        <name>Mg(2+)</name>
        <dbReference type="ChEBI" id="CHEBI:18420"/>
    </ligand>
</feature>
<feature type="binding site" evidence="1">
    <location>
        <position position="460"/>
    </location>
    <ligand>
        <name>ATP</name>
        <dbReference type="ChEBI" id="CHEBI:30616"/>
    </ligand>
</feature>
<feature type="binding site" evidence="1">
    <location>
        <position position="553"/>
    </location>
    <ligand>
        <name>ATP</name>
        <dbReference type="ChEBI" id="CHEBI:30616"/>
    </ligand>
</feature>
<feature type="binding site" evidence="1">
    <location>
        <position position="580"/>
    </location>
    <ligand>
        <name>ATP</name>
        <dbReference type="ChEBI" id="CHEBI:30616"/>
    </ligand>
</feature>
<dbReference type="EC" id="2.7.4.1" evidence="1"/>
<dbReference type="EMBL" id="Y07620">
    <property type="protein sequence ID" value="CAA68899.1"/>
    <property type="molecule type" value="Genomic_DNA"/>
</dbReference>
<dbReference type="SMR" id="O32350"/>
<dbReference type="STRING" id="195.ATE51_00844"/>
<dbReference type="eggNOG" id="COG0855">
    <property type="taxonomic scope" value="Bacteria"/>
</dbReference>
<dbReference type="GO" id="GO:0009358">
    <property type="term" value="C:polyphosphate kinase complex"/>
    <property type="evidence" value="ECO:0007669"/>
    <property type="project" value="InterPro"/>
</dbReference>
<dbReference type="GO" id="GO:0005524">
    <property type="term" value="F:ATP binding"/>
    <property type="evidence" value="ECO:0007669"/>
    <property type="project" value="UniProtKB-KW"/>
</dbReference>
<dbReference type="GO" id="GO:0046872">
    <property type="term" value="F:metal ion binding"/>
    <property type="evidence" value="ECO:0007669"/>
    <property type="project" value="UniProtKB-KW"/>
</dbReference>
<dbReference type="GO" id="GO:0008976">
    <property type="term" value="F:polyphosphate kinase activity"/>
    <property type="evidence" value="ECO:0007669"/>
    <property type="project" value="UniProtKB-UniRule"/>
</dbReference>
<dbReference type="GO" id="GO:0006799">
    <property type="term" value="P:polyphosphate biosynthetic process"/>
    <property type="evidence" value="ECO:0007669"/>
    <property type="project" value="UniProtKB-UniRule"/>
</dbReference>
<dbReference type="CDD" id="cd09165">
    <property type="entry name" value="PLDc_PaPPK1_C1_like"/>
    <property type="match status" value="1"/>
</dbReference>
<dbReference type="CDD" id="cd09168">
    <property type="entry name" value="PLDc_PaPPK1_C2_like"/>
    <property type="match status" value="1"/>
</dbReference>
<dbReference type="Gene3D" id="3.30.870.10">
    <property type="entry name" value="Endonuclease Chain A"/>
    <property type="match status" value="2"/>
</dbReference>
<dbReference type="Gene3D" id="3.30.1840.10">
    <property type="entry name" value="Polyphosphate kinase middle domain"/>
    <property type="match status" value="1"/>
</dbReference>
<dbReference type="Gene3D" id="1.20.58.310">
    <property type="entry name" value="Polyphosphate kinase N-terminal domain"/>
    <property type="match status" value="1"/>
</dbReference>
<dbReference type="HAMAP" id="MF_00347">
    <property type="entry name" value="Polyphosphate_kinase"/>
    <property type="match status" value="1"/>
</dbReference>
<dbReference type="InterPro" id="IPR003414">
    <property type="entry name" value="PP_kinase"/>
</dbReference>
<dbReference type="InterPro" id="IPR041108">
    <property type="entry name" value="PP_kinase_C_1"/>
</dbReference>
<dbReference type="InterPro" id="IPR024953">
    <property type="entry name" value="PP_kinase_middle"/>
</dbReference>
<dbReference type="InterPro" id="IPR036830">
    <property type="entry name" value="PP_kinase_middle_dom_sf"/>
</dbReference>
<dbReference type="InterPro" id="IPR025200">
    <property type="entry name" value="PPK_C_dom2"/>
</dbReference>
<dbReference type="InterPro" id="IPR025198">
    <property type="entry name" value="PPK_N_dom"/>
</dbReference>
<dbReference type="InterPro" id="IPR036832">
    <property type="entry name" value="PPK_N_dom_sf"/>
</dbReference>
<dbReference type="NCBIfam" id="TIGR03705">
    <property type="entry name" value="poly_P_kin"/>
    <property type="match status" value="1"/>
</dbReference>
<dbReference type="NCBIfam" id="NF003921">
    <property type="entry name" value="PRK05443.2-2"/>
    <property type="match status" value="1"/>
</dbReference>
<dbReference type="NCBIfam" id="NF003924">
    <property type="entry name" value="PRK05443.3-2"/>
    <property type="match status" value="1"/>
</dbReference>
<dbReference type="PANTHER" id="PTHR30218">
    <property type="entry name" value="POLYPHOSPHATE KINASE"/>
    <property type="match status" value="1"/>
</dbReference>
<dbReference type="PANTHER" id="PTHR30218:SF0">
    <property type="entry name" value="POLYPHOSPHATE KINASE"/>
    <property type="match status" value="1"/>
</dbReference>
<dbReference type="Pfam" id="PF02503">
    <property type="entry name" value="PP_kinase"/>
    <property type="match status" value="1"/>
</dbReference>
<dbReference type="Pfam" id="PF13090">
    <property type="entry name" value="PP_kinase_C"/>
    <property type="match status" value="1"/>
</dbReference>
<dbReference type="Pfam" id="PF17941">
    <property type="entry name" value="PP_kinase_C_1"/>
    <property type="match status" value="1"/>
</dbReference>
<dbReference type="Pfam" id="PF13089">
    <property type="entry name" value="PP_kinase_N"/>
    <property type="match status" value="1"/>
</dbReference>
<dbReference type="PIRSF" id="PIRSF015589">
    <property type="entry name" value="PP_kinase"/>
    <property type="match status" value="1"/>
</dbReference>
<dbReference type="SUPFAM" id="SSF56024">
    <property type="entry name" value="Phospholipase D/nuclease"/>
    <property type="match status" value="2"/>
</dbReference>
<dbReference type="SUPFAM" id="SSF143724">
    <property type="entry name" value="PHP14-like"/>
    <property type="match status" value="1"/>
</dbReference>
<dbReference type="SUPFAM" id="SSF140356">
    <property type="entry name" value="PPK N-terminal domain-like"/>
    <property type="match status" value="1"/>
</dbReference>
<name>PPK1_CAMCO</name>
<accession>O32350</accession>
<sequence>MQTNPNMFLNRELSWLRFNSRVLDQCSRPLPLLERLKFVAIYCTNLDEFYMIRVAGLKQLFSAGVNISSSDEMSPLQQLKAIRKYLHKEKDLLEHYFNEIISDLEKENLFIKNYENLDNNLKQKVYEYFFSTIFPVIVPIAVDATHPFPHLNNLSFSLAVNICDNTHPELIKFGMIRIPRVLPRFYEVSANVYVPIESIVEKHTEEIFPGYKLLTSAAFRVTRNADMVIEEEEADDFMMILEQGLKLRRKGAFVRLQIQKGADEQIVEFLNTHMKIFHKDVYEYSILLNLPSLWQIAGNKTFTHLLSPLYTPKTLPPFDENLSIFDAIDKEDILIIQPFESFDPVYKFIKEASKDPEVISIRMTLYRVEKNSNIVQALIGAASAGIQVTVMVELKARFDEENNLHWAKALENAGAHVIYGITGFKVHAKVSQVIRKKGDKLKFYMHLSTGNYNASSAKIYTDVSYFTSKVEFARDTTSFFHILSGFSKNRRLQTLSMSPNQIKEKILEMIALEASKGSEGVIIAKMNSLVDSDIIKALYEASIKGTQIDLIVRGIFCLKPNEEFSKNILVRSIIGKYLEHARVFYFKHSEPNYFISSADWMPRNLERRLELMTPIYDERSKAKLAQFLRLQLSDNLLAYELQNDGEYAKVASNEKVIDSQQILEEYVSKIYKTLKKDTDQSRATHLASKLFKEN</sequence>